<reference key="1">
    <citation type="journal article" date="2003" name="Science">
        <title>Role of mobile DNA in the evolution of vancomycin-resistant Enterococcus faecalis.</title>
        <authorList>
            <person name="Paulsen I.T."/>
            <person name="Banerjei L."/>
            <person name="Myers G.S.A."/>
            <person name="Nelson K.E."/>
            <person name="Seshadri R."/>
            <person name="Read T.D."/>
            <person name="Fouts D.E."/>
            <person name="Eisen J.A."/>
            <person name="Gill S.R."/>
            <person name="Heidelberg J.F."/>
            <person name="Tettelin H."/>
            <person name="Dodson R.J."/>
            <person name="Umayam L.A."/>
            <person name="Brinkac L.M."/>
            <person name="Beanan M.J."/>
            <person name="Daugherty S.C."/>
            <person name="DeBoy R.T."/>
            <person name="Durkin S.A."/>
            <person name="Kolonay J.F."/>
            <person name="Madupu R."/>
            <person name="Nelson W.C."/>
            <person name="Vamathevan J.J."/>
            <person name="Tran B."/>
            <person name="Upton J."/>
            <person name="Hansen T."/>
            <person name="Shetty J."/>
            <person name="Khouri H.M."/>
            <person name="Utterback T.R."/>
            <person name="Radune D."/>
            <person name="Ketchum K.A."/>
            <person name="Dougherty B.A."/>
            <person name="Fraser C.M."/>
        </authorList>
    </citation>
    <scope>NUCLEOTIDE SEQUENCE [LARGE SCALE GENOMIC DNA]</scope>
    <source>
        <strain>ATCC 700802 / V583</strain>
    </source>
</reference>
<feature type="chain" id="PRO_0000152015" description="Leucine--tRNA ligase">
    <location>
        <begin position="1"/>
        <end position="804"/>
    </location>
</feature>
<feature type="short sequence motif" description="'HIGH' region">
    <location>
        <begin position="40"/>
        <end position="51"/>
    </location>
</feature>
<feature type="short sequence motif" description="'KMSKS' region">
    <location>
        <begin position="576"/>
        <end position="580"/>
    </location>
</feature>
<feature type="binding site" evidence="1">
    <location>
        <position position="579"/>
    </location>
    <ligand>
        <name>ATP</name>
        <dbReference type="ChEBI" id="CHEBI:30616"/>
    </ligand>
</feature>
<proteinExistence type="inferred from homology"/>
<organism>
    <name type="scientific">Enterococcus faecalis (strain ATCC 700802 / V583)</name>
    <dbReference type="NCBI Taxonomy" id="226185"/>
    <lineage>
        <taxon>Bacteria</taxon>
        <taxon>Bacillati</taxon>
        <taxon>Bacillota</taxon>
        <taxon>Bacilli</taxon>
        <taxon>Lactobacillales</taxon>
        <taxon>Enterococcaceae</taxon>
        <taxon>Enterococcus</taxon>
    </lineage>
</organism>
<keyword id="KW-0030">Aminoacyl-tRNA synthetase</keyword>
<keyword id="KW-0067">ATP-binding</keyword>
<keyword id="KW-0963">Cytoplasm</keyword>
<keyword id="KW-0436">Ligase</keyword>
<keyword id="KW-0547">Nucleotide-binding</keyword>
<keyword id="KW-0648">Protein biosynthesis</keyword>
<keyword id="KW-1185">Reference proteome</keyword>
<dbReference type="EC" id="6.1.1.4" evidence="1"/>
<dbReference type="EMBL" id="AE016830">
    <property type="protein sequence ID" value="AAO80614.1"/>
    <property type="molecule type" value="Genomic_DNA"/>
</dbReference>
<dbReference type="RefSeq" id="NP_814544.1">
    <property type="nucleotide sequence ID" value="NC_004668.1"/>
</dbReference>
<dbReference type="RefSeq" id="WP_010706700.1">
    <property type="nucleotide sequence ID" value="NZ_KE136527.1"/>
</dbReference>
<dbReference type="SMR" id="Q837N5"/>
<dbReference type="STRING" id="226185.EF_0801"/>
<dbReference type="EnsemblBacteria" id="AAO80614">
    <property type="protein sequence ID" value="AAO80614"/>
    <property type="gene ID" value="EF_0801"/>
</dbReference>
<dbReference type="KEGG" id="efa:EF0801"/>
<dbReference type="PATRIC" id="fig|226185.45.peg.2737"/>
<dbReference type="eggNOG" id="COG0495">
    <property type="taxonomic scope" value="Bacteria"/>
</dbReference>
<dbReference type="HOGENOM" id="CLU_004427_0_0_9"/>
<dbReference type="Proteomes" id="UP000001415">
    <property type="component" value="Chromosome"/>
</dbReference>
<dbReference type="GO" id="GO:0005829">
    <property type="term" value="C:cytosol"/>
    <property type="evidence" value="ECO:0007669"/>
    <property type="project" value="TreeGrafter"/>
</dbReference>
<dbReference type="GO" id="GO:0002161">
    <property type="term" value="F:aminoacyl-tRNA deacylase activity"/>
    <property type="evidence" value="ECO:0007669"/>
    <property type="project" value="InterPro"/>
</dbReference>
<dbReference type="GO" id="GO:0005524">
    <property type="term" value="F:ATP binding"/>
    <property type="evidence" value="ECO:0007669"/>
    <property type="project" value="UniProtKB-UniRule"/>
</dbReference>
<dbReference type="GO" id="GO:0004823">
    <property type="term" value="F:leucine-tRNA ligase activity"/>
    <property type="evidence" value="ECO:0007669"/>
    <property type="project" value="UniProtKB-UniRule"/>
</dbReference>
<dbReference type="GO" id="GO:0006429">
    <property type="term" value="P:leucyl-tRNA aminoacylation"/>
    <property type="evidence" value="ECO:0007669"/>
    <property type="project" value="UniProtKB-UniRule"/>
</dbReference>
<dbReference type="CDD" id="cd07958">
    <property type="entry name" value="Anticodon_Ia_Leu_BEm"/>
    <property type="match status" value="1"/>
</dbReference>
<dbReference type="CDD" id="cd00812">
    <property type="entry name" value="LeuRS_core"/>
    <property type="match status" value="1"/>
</dbReference>
<dbReference type="FunFam" id="3.10.20.590:FF:000001">
    <property type="entry name" value="Leucine--tRNA ligase"/>
    <property type="match status" value="1"/>
</dbReference>
<dbReference type="FunFam" id="3.40.50.620:FF:000056">
    <property type="entry name" value="Leucine--tRNA ligase"/>
    <property type="match status" value="1"/>
</dbReference>
<dbReference type="FunFam" id="3.40.50.620:FF:000077">
    <property type="entry name" value="Leucine--tRNA ligase"/>
    <property type="match status" value="1"/>
</dbReference>
<dbReference type="FunFam" id="1.10.730.10:FF:000011">
    <property type="entry name" value="Leucine--tRNA ligase chloroplastic/mitochondrial"/>
    <property type="match status" value="1"/>
</dbReference>
<dbReference type="Gene3D" id="3.10.20.590">
    <property type="match status" value="1"/>
</dbReference>
<dbReference type="Gene3D" id="3.40.50.620">
    <property type="entry name" value="HUPs"/>
    <property type="match status" value="2"/>
</dbReference>
<dbReference type="Gene3D" id="1.10.730.10">
    <property type="entry name" value="Isoleucyl-tRNA Synthetase, Domain 1"/>
    <property type="match status" value="1"/>
</dbReference>
<dbReference type="Gene3D" id="3.90.740.10">
    <property type="entry name" value="Valyl/Leucyl/Isoleucyl-tRNA synthetase, editing domain"/>
    <property type="match status" value="1"/>
</dbReference>
<dbReference type="HAMAP" id="MF_00049_B">
    <property type="entry name" value="Leu_tRNA_synth_B"/>
    <property type="match status" value="1"/>
</dbReference>
<dbReference type="InterPro" id="IPR001412">
    <property type="entry name" value="aa-tRNA-synth_I_CS"/>
</dbReference>
<dbReference type="InterPro" id="IPR002300">
    <property type="entry name" value="aa-tRNA-synth_Ia"/>
</dbReference>
<dbReference type="InterPro" id="IPR002302">
    <property type="entry name" value="Leu-tRNA-ligase"/>
</dbReference>
<dbReference type="InterPro" id="IPR025709">
    <property type="entry name" value="Leu_tRNA-synth_edit"/>
</dbReference>
<dbReference type="InterPro" id="IPR013155">
    <property type="entry name" value="M/V/L/I-tRNA-synth_anticd-bd"/>
</dbReference>
<dbReference type="InterPro" id="IPR015413">
    <property type="entry name" value="Methionyl/Leucyl_tRNA_Synth"/>
</dbReference>
<dbReference type="InterPro" id="IPR014729">
    <property type="entry name" value="Rossmann-like_a/b/a_fold"/>
</dbReference>
<dbReference type="InterPro" id="IPR009080">
    <property type="entry name" value="tRNAsynth_Ia_anticodon-bd"/>
</dbReference>
<dbReference type="InterPro" id="IPR009008">
    <property type="entry name" value="Val/Leu/Ile-tRNA-synth_edit"/>
</dbReference>
<dbReference type="NCBIfam" id="TIGR00396">
    <property type="entry name" value="leuS_bact"/>
    <property type="match status" value="1"/>
</dbReference>
<dbReference type="PANTHER" id="PTHR43740:SF2">
    <property type="entry name" value="LEUCINE--TRNA LIGASE, MITOCHONDRIAL"/>
    <property type="match status" value="1"/>
</dbReference>
<dbReference type="PANTHER" id="PTHR43740">
    <property type="entry name" value="LEUCYL-TRNA SYNTHETASE"/>
    <property type="match status" value="1"/>
</dbReference>
<dbReference type="Pfam" id="PF08264">
    <property type="entry name" value="Anticodon_1"/>
    <property type="match status" value="1"/>
</dbReference>
<dbReference type="Pfam" id="PF00133">
    <property type="entry name" value="tRNA-synt_1"/>
    <property type="match status" value="1"/>
</dbReference>
<dbReference type="Pfam" id="PF13603">
    <property type="entry name" value="tRNA-synt_1_2"/>
    <property type="match status" value="1"/>
</dbReference>
<dbReference type="Pfam" id="PF09334">
    <property type="entry name" value="tRNA-synt_1g"/>
    <property type="match status" value="1"/>
</dbReference>
<dbReference type="PRINTS" id="PR00985">
    <property type="entry name" value="TRNASYNTHLEU"/>
</dbReference>
<dbReference type="SUPFAM" id="SSF47323">
    <property type="entry name" value="Anticodon-binding domain of a subclass of class I aminoacyl-tRNA synthetases"/>
    <property type="match status" value="1"/>
</dbReference>
<dbReference type="SUPFAM" id="SSF52374">
    <property type="entry name" value="Nucleotidylyl transferase"/>
    <property type="match status" value="1"/>
</dbReference>
<dbReference type="SUPFAM" id="SSF50677">
    <property type="entry name" value="ValRS/IleRS/LeuRS editing domain"/>
    <property type="match status" value="1"/>
</dbReference>
<dbReference type="PROSITE" id="PS00178">
    <property type="entry name" value="AA_TRNA_LIGASE_I"/>
    <property type="match status" value="1"/>
</dbReference>
<name>SYL_ENTFA</name>
<gene>
    <name evidence="1" type="primary">leuS</name>
    <name type="ordered locus">EF_0801</name>
</gene>
<sequence>MSYNHKEIEKKWQKYWAKNNCFNTLDDPNKEKFYALDMFPYPSGQGLHVGHPEGYTATDILSRMKRAQGYNVLHPMGWDAFGLPAEQYALDTGNDPAEFTKKNIETFRRQINSLGFSYDWNREINTTDPEYYKWTQWIFTKLYEKGLAYEAEVAVNWVPELGTVISNEEVIDGKSERGGYDVVRRPMRQWMLKITAYADRLLEDLELVDWPESIKDMQRNWIGRSEGANVTFKVAGTEESFTVFTTRPDTLFGATYTVLAPELELVKKITTPEQTAAVEAYIEETSKKSDLNRTDLAKEKTGVFTGAYAINPVNGQEIPIWIGDYVLASYGTGAIMAVPAHDERDYEFAKTFGIDILPVIAGGDITTEAYTGDGPHINSDFLNGLNKAEAIAKMNEWLEENHVGKKEVSYRLRDWLFSRQRYWGEPIPVIHWEDGTTTTVPESELPLRLPVTSDIRPSGTGESPLANIDEWVNVVDPETGMKGKRETNTMPQWAGSSWYYLRFIDPHNKNEIADFEKLKRWLPVDIYIGGAEHAVLHLLYARFWHKFLYDIGVVPTKEPFQKLYNQGMILGENNEKMSKSRGNVVNPDDVVAKYGADTLRLYEMFMGPLDASIAWNENGLEGSRKFLDRVWRLIVDEEGKMRDRITTINDGRLTKVYHQTVKKVTEDMANLHFNTAISQLMVFVNEANKVDALPYEYVEGFVQLLAPIAPHIGEELWQILGNEESLTYVPWPTYDETALVEDEVEVVFQVNGKLRGKQNVARGLSKEELEQIAMNHEAVKEFIEGKTVRKVIAVPDKLVNIVAN</sequence>
<accession>Q837N5</accession>
<evidence type="ECO:0000255" key="1">
    <source>
        <dbReference type="HAMAP-Rule" id="MF_00049"/>
    </source>
</evidence>
<comment type="catalytic activity">
    <reaction evidence="1">
        <text>tRNA(Leu) + L-leucine + ATP = L-leucyl-tRNA(Leu) + AMP + diphosphate</text>
        <dbReference type="Rhea" id="RHEA:11688"/>
        <dbReference type="Rhea" id="RHEA-COMP:9613"/>
        <dbReference type="Rhea" id="RHEA-COMP:9622"/>
        <dbReference type="ChEBI" id="CHEBI:30616"/>
        <dbReference type="ChEBI" id="CHEBI:33019"/>
        <dbReference type="ChEBI" id="CHEBI:57427"/>
        <dbReference type="ChEBI" id="CHEBI:78442"/>
        <dbReference type="ChEBI" id="CHEBI:78494"/>
        <dbReference type="ChEBI" id="CHEBI:456215"/>
        <dbReference type="EC" id="6.1.1.4"/>
    </reaction>
</comment>
<comment type="subcellular location">
    <subcellularLocation>
        <location evidence="1">Cytoplasm</location>
    </subcellularLocation>
</comment>
<comment type="similarity">
    <text evidence="1">Belongs to the class-I aminoacyl-tRNA synthetase family.</text>
</comment>
<protein>
    <recommendedName>
        <fullName evidence="1">Leucine--tRNA ligase</fullName>
        <ecNumber evidence="1">6.1.1.4</ecNumber>
    </recommendedName>
    <alternativeName>
        <fullName evidence="1">Leucyl-tRNA synthetase</fullName>
        <shortName evidence="1">LeuRS</shortName>
    </alternativeName>
</protein>